<organism>
    <name type="scientific">Bradyrhizobium sp. (strain ORS 278)</name>
    <dbReference type="NCBI Taxonomy" id="114615"/>
    <lineage>
        <taxon>Bacteria</taxon>
        <taxon>Pseudomonadati</taxon>
        <taxon>Pseudomonadota</taxon>
        <taxon>Alphaproteobacteria</taxon>
        <taxon>Hyphomicrobiales</taxon>
        <taxon>Nitrobacteraceae</taxon>
        <taxon>Bradyrhizobium</taxon>
    </lineage>
</organism>
<name>HYPA_BRASO</name>
<dbReference type="EMBL" id="CU234118">
    <property type="protein sequence ID" value="CAL75571.1"/>
    <property type="molecule type" value="Genomic_DNA"/>
</dbReference>
<dbReference type="RefSeq" id="WP_011924799.1">
    <property type="nucleotide sequence ID" value="NC_009445.1"/>
</dbReference>
<dbReference type="SMR" id="A4YNU5"/>
<dbReference type="STRING" id="114615.BRADO1694"/>
<dbReference type="KEGG" id="bra:BRADO1694"/>
<dbReference type="eggNOG" id="COG0375">
    <property type="taxonomic scope" value="Bacteria"/>
</dbReference>
<dbReference type="HOGENOM" id="CLU_126929_0_0_5"/>
<dbReference type="OrthoDB" id="288014at2"/>
<dbReference type="Proteomes" id="UP000001994">
    <property type="component" value="Chromosome"/>
</dbReference>
<dbReference type="GO" id="GO:0016151">
    <property type="term" value="F:nickel cation binding"/>
    <property type="evidence" value="ECO:0007669"/>
    <property type="project" value="UniProtKB-UniRule"/>
</dbReference>
<dbReference type="GO" id="GO:0008270">
    <property type="term" value="F:zinc ion binding"/>
    <property type="evidence" value="ECO:0007669"/>
    <property type="project" value="UniProtKB-UniRule"/>
</dbReference>
<dbReference type="GO" id="GO:0051604">
    <property type="term" value="P:protein maturation"/>
    <property type="evidence" value="ECO:0007669"/>
    <property type="project" value="InterPro"/>
</dbReference>
<dbReference type="GO" id="GO:0036211">
    <property type="term" value="P:protein modification process"/>
    <property type="evidence" value="ECO:0007669"/>
    <property type="project" value="UniProtKB-UniRule"/>
</dbReference>
<dbReference type="FunFam" id="3.30.2320.80:FF:000001">
    <property type="entry name" value="Hydrogenase maturation factor HypA"/>
    <property type="match status" value="1"/>
</dbReference>
<dbReference type="Gene3D" id="3.30.2320.80">
    <property type="match status" value="1"/>
</dbReference>
<dbReference type="HAMAP" id="MF_00213">
    <property type="entry name" value="HypA_HybF"/>
    <property type="match status" value="1"/>
</dbReference>
<dbReference type="InterPro" id="IPR020538">
    <property type="entry name" value="Hydgase_Ni_incorp_HypA/HybF_CS"/>
</dbReference>
<dbReference type="InterPro" id="IPR000688">
    <property type="entry name" value="HypA/HybF"/>
</dbReference>
<dbReference type="NCBIfam" id="TIGR00100">
    <property type="entry name" value="hypA"/>
    <property type="match status" value="1"/>
</dbReference>
<dbReference type="PANTHER" id="PTHR34535">
    <property type="entry name" value="HYDROGENASE MATURATION FACTOR HYPA"/>
    <property type="match status" value="1"/>
</dbReference>
<dbReference type="PANTHER" id="PTHR34535:SF3">
    <property type="entry name" value="HYDROGENASE MATURATION FACTOR HYPA"/>
    <property type="match status" value="1"/>
</dbReference>
<dbReference type="Pfam" id="PF01155">
    <property type="entry name" value="HypA"/>
    <property type="match status" value="1"/>
</dbReference>
<dbReference type="PIRSF" id="PIRSF004761">
    <property type="entry name" value="Hydrgn_mat_HypA"/>
    <property type="match status" value="1"/>
</dbReference>
<dbReference type="PROSITE" id="PS01249">
    <property type="entry name" value="HYPA"/>
    <property type="match status" value="1"/>
</dbReference>
<accession>A4YNU5</accession>
<evidence type="ECO:0000255" key="1">
    <source>
        <dbReference type="HAMAP-Rule" id="MF_00213"/>
    </source>
</evidence>
<sequence>MHEMALCEGIVEIVEAEARKGAFSKVKTVWLEIGALSHVAPEALRFCFEAVTAHTIARGAALEIIEQKGSAWCLGCSRSVEISRRYDACSECGSHQLQVTGGEDMRVKELEVE</sequence>
<keyword id="KW-0479">Metal-binding</keyword>
<keyword id="KW-0533">Nickel</keyword>
<keyword id="KW-1185">Reference proteome</keyword>
<keyword id="KW-0862">Zinc</keyword>
<feature type="chain" id="PRO_1000023823" description="Hydrogenase maturation factor HypA">
    <location>
        <begin position="1"/>
        <end position="113"/>
    </location>
</feature>
<feature type="binding site" evidence="1">
    <location>
        <position position="2"/>
    </location>
    <ligand>
        <name>Ni(2+)</name>
        <dbReference type="ChEBI" id="CHEBI:49786"/>
    </ligand>
</feature>
<feature type="binding site" evidence="1">
    <location>
        <position position="73"/>
    </location>
    <ligand>
        <name>Zn(2+)</name>
        <dbReference type="ChEBI" id="CHEBI:29105"/>
    </ligand>
</feature>
<feature type="binding site" evidence="1">
    <location>
        <position position="76"/>
    </location>
    <ligand>
        <name>Zn(2+)</name>
        <dbReference type="ChEBI" id="CHEBI:29105"/>
    </ligand>
</feature>
<feature type="binding site" evidence="1">
    <location>
        <position position="89"/>
    </location>
    <ligand>
        <name>Zn(2+)</name>
        <dbReference type="ChEBI" id="CHEBI:29105"/>
    </ligand>
</feature>
<feature type="binding site" evidence="1">
    <location>
        <position position="92"/>
    </location>
    <ligand>
        <name>Zn(2+)</name>
        <dbReference type="ChEBI" id="CHEBI:29105"/>
    </ligand>
</feature>
<protein>
    <recommendedName>
        <fullName evidence="1">Hydrogenase maturation factor HypA</fullName>
    </recommendedName>
</protein>
<proteinExistence type="inferred from homology"/>
<reference key="1">
    <citation type="journal article" date="2007" name="Science">
        <title>Legumes symbioses: absence of nod genes in photosynthetic bradyrhizobia.</title>
        <authorList>
            <person name="Giraud E."/>
            <person name="Moulin L."/>
            <person name="Vallenet D."/>
            <person name="Barbe V."/>
            <person name="Cytryn E."/>
            <person name="Avarre J.-C."/>
            <person name="Jaubert M."/>
            <person name="Simon D."/>
            <person name="Cartieaux F."/>
            <person name="Prin Y."/>
            <person name="Bena G."/>
            <person name="Hannibal L."/>
            <person name="Fardoux J."/>
            <person name="Kojadinovic M."/>
            <person name="Vuillet L."/>
            <person name="Lajus A."/>
            <person name="Cruveiller S."/>
            <person name="Rouy Z."/>
            <person name="Mangenot S."/>
            <person name="Segurens B."/>
            <person name="Dossat C."/>
            <person name="Franck W.L."/>
            <person name="Chang W.-S."/>
            <person name="Saunders E."/>
            <person name="Bruce D."/>
            <person name="Richardson P."/>
            <person name="Normand P."/>
            <person name="Dreyfus B."/>
            <person name="Pignol D."/>
            <person name="Stacey G."/>
            <person name="Emerich D."/>
            <person name="Vermeglio A."/>
            <person name="Medigue C."/>
            <person name="Sadowsky M."/>
        </authorList>
    </citation>
    <scope>NUCLEOTIDE SEQUENCE [LARGE SCALE GENOMIC DNA]</scope>
    <source>
        <strain>ORS 278</strain>
    </source>
</reference>
<gene>
    <name evidence="1" type="primary">hypA</name>
    <name type="ordered locus">BRADO1694</name>
</gene>
<comment type="function">
    <text evidence="1">Involved in the maturation of [NiFe] hydrogenases. Required for nickel insertion into the metal center of the hydrogenase.</text>
</comment>
<comment type="similarity">
    <text evidence="1">Belongs to the HypA/HybF family.</text>
</comment>